<keyword id="KW-0963">Cytoplasm</keyword>
<keyword id="KW-0460">Magnesium</keyword>
<keyword id="KW-0479">Metal-binding</keyword>
<keyword id="KW-0548">Nucleotidyltransferase</keyword>
<keyword id="KW-1185">Reference proteome</keyword>
<keyword id="KW-0694">RNA-binding</keyword>
<keyword id="KW-0808">Transferase</keyword>
<accession>Q7MW79</accession>
<gene>
    <name evidence="1" type="primary">pnp</name>
    <name type="ordered locus">PG_0766</name>
</gene>
<feature type="chain" id="PRO_0000329762" description="Polyribonucleotide nucleotidyltransferase">
    <location>
        <begin position="1"/>
        <end position="743"/>
    </location>
</feature>
<feature type="domain" description="KH" evidence="1">
    <location>
        <begin position="556"/>
        <end position="618"/>
    </location>
</feature>
<feature type="domain" description="S1 motif" evidence="1">
    <location>
        <begin position="628"/>
        <end position="698"/>
    </location>
</feature>
<feature type="region of interest" description="Disordered" evidence="2">
    <location>
        <begin position="704"/>
        <end position="743"/>
    </location>
</feature>
<feature type="binding site" evidence="1">
    <location>
        <position position="489"/>
    </location>
    <ligand>
        <name>Mg(2+)</name>
        <dbReference type="ChEBI" id="CHEBI:18420"/>
    </ligand>
</feature>
<feature type="binding site" evidence="1">
    <location>
        <position position="495"/>
    </location>
    <ligand>
        <name>Mg(2+)</name>
        <dbReference type="ChEBI" id="CHEBI:18420"/>
    </ligand>
</feature>
<sequence>MLNVVSKTIDLGDGRSIKIETGKLAKQADGAVTVTMGNTVLLATVCAAKDANPGCDFMPLQVEYKEKYSAIGRFPGGFTRREGKASDYEILTCRLVDRALRPLFPDNYHAEVFVNVILFSADGEDMPDALAGLAASAALAVSDIPFNGPISEVRVARVDGRYIVNPTFEQLERADIDLMVGATMDNIMMVEGEMDEVQESEMLEGIRVAHEAIKVQCKAQLELSEAVGKLQKREYSHEVNDEDLRKKVHDECYARAYEVATSGTGKHERGEAFEKIVEEFKAQYTEEELAEKAEMIARYYHDVEKEAMRRAILDEGKRLDGRKTTEIRPIWIETDCLPGPHGSAIFTRGETQSLTTVTLGTKSDEKLVDDVLNYTKERFLLHYNFPPFSTGEARPQRGVGRREIGHGNLAHRALKRMIPTDYPYVVRVISDILESNGSSSMATVCAGTLALRDAGVQIRKPVSGIAMGLISENQGKNYAILSDILGDEDHLGDMDFKVTGTKDGITATQMDIKVDGLSYEILENALEQAKQGRLHILGKIMEAQPETRDDLKPHAPRIEKMHIGKEFIGAVIGPGGKIIQGIQEKSGATVNIEEVDGMGVIEISGTNKPCIDAAIGMIKGIVAMPEVGETYPGKITSVMPYGCFVEFLPGKEGLLHISEVDWKRFETIEDTNLKEGESINVKLLDIDPKTGKFKLSRKVLLEKPEGYVEPQPRERRERREGGREGGRNFERRGGDRDHREPRG</sequence>
<comment type="function">
    <text evidence="1">Involved in mRNA degradation. Catalyzes the phosphorolysis of single-stranded polyribonucleotides processively in the 3'- to 5'-direction.</text>
</comment>
<comment type="catalytic activity">
    <reaction evidence="1">
        <text>RNA(n+1) + phosphate = RNA(n) + a ribonucleoside 5'-diphosphate</text>
        <dbReference type="Rhea" id="RHEA:22096"/>
        <dbReference type="Rhea" id="RHEA-COMP:14527"/>
        <dbReference type="Rhea" id="RHEA-COMP:17342"/>
        <dbReference type="ChEBI" id="CHEBI:43474"/>
        <dbReference type="ChEBI" id="CHEBI:57930"/>
        <dbReference type="ChEBI" id="CHEBI:140395"/>
        <dbReference type="EC" id="2.7.7.8"/>
    </reaction>
</comment>
<comment type="cofactor">
    <cofactor evidence="1">
        <name>Mg(2+)</name>
        <dbReference type="ChEBI" id="CHEBI:18420"/>
    </cofactor>
</comment>
<comment type="subcellular location">
    <subcellularLocation>
        <location evidence="1">Cytoplasm</location>
    </subcellularLocation>
</comment>
<comment type="similarity">
    <text evidence="1">Belongs to the polyribonucleotide nucleotidyltransferase family.</text>
</comment>
<protein>
    <recommendedName>
        <fullName evidence="1">Polyribonucleotide nucleotidyltransferase</fullName>
        <ecNumber evidence="1">2.7.7.8</ecNumber>
    </recommendedName>
    <alternativeName>
        <fullName evidence="1">Polynucleotide phosphorylase</fullName>
        <shortName evidence="1">PNPase</shortName>
    </alternativeName>
</protein>
<dbReference type="EC" id="2.7.7.8" evidence="1"/>
<dbReference type="EMBL" id="AE015924">
    <property type="protein sequence ID" value="AAQ65927.1"/>
    <property type="molecule type" value="Genomic_DNA"/>
</dbReference>
<dbReference type="RefSeq" id="WP_004585303.1">
    <property type="nucleotide sequence ID" value="NC_002950.2"/>
</dbReference>
<dbReference type="SMR" id="Q7MW79"/>
<dbReference type="STRING" id="242619.PG_0766"/>
<dbReference type="DNASU" id="2552025"/>
<dbReference type="EnsemblBacteria" id="AAQ65927">
    <property type="protein sequence ID" value="AAQ65927"/>
    <property type="gene ID" value="PG_0766"/>
</dbReference>
<dbReference type="KEGG" id="pgi:PG_0766"/>
<dbReference type="eggNOG" id="COG1185">
    <property type="taxonomic scope" value="Bacteria"/>
</dbReference>
<dbReference type="HOGENOM" id="CLU_004217_2_2_10"/>
<dbReference type="Proteomes" id="UP000000588">
    <property type="component" value="Chromosome"/>
</dbReference>
<dbReference type="GO" id="GO:0005829">
    <property type="term" value="C:cytosol"/>
    <property type="evidence" value="ECO:0007669"/>
    <property type="project" value="TreeGrafter"/>
</dbReference>
<dbReference type="GO" id="GO:0000175">
    <property type="term" value="F:3'-5'-RNA exonuclease activity"/>
    <property type="evidence" value="ECO:0007669"/>
    <property type="project" value="TreeGrafter"/>
</dbReference>
<dbReference type="GO" id="GO:0000287">
    <property type="term" value="F:magnesium ion binding"/>
    <property type="evidence" value="ECO:0007669"/>
    <property type="project" value="UniProtKB-UniRule"/>
</dbReference>
<dbReference type="GO" id="GO:0004654">
    <property type="term" value="F:polyribonucleotide nucleotidyltransferase activity"/>
    <property type="evidence" value="ECO:0007669"/>
    <property type="project" value="UniProtKB-UniRule"/>
</dbReference>
<dbReference type="GO" id="GO:0003723">
    <property type="term" value="F:RNA binding"/>
    <property type="evidence" value="ECO:0007669"/>
    <property type="project" value="UniProtKB-UniRule"/>
</dbReference>
<dbReference type="GO" id="GO:0006402">
    <property type="term" value="P:mRNA catabolic process"/>
    <property type="evidence" value="ECO:0007669"/>
    <property type="project" value="UniProtKB-UniRule"/>
</dbReference>
<dbReference type="GO" id="GO:0006396">
    <property type="term" value="P:RNA processing"/>
    <property type="evidence" value="ECO:0007669"/>
    <property type="project" value="InterPro"/>
</dbReference>
<dbReference type="CDD" id="cd02393">
    <property type="entry name" value="KH-I_PNPase"/>
    <property type="match status" value="1"/>
</dbReference>
<dbReference type="CDD" id="cd11363">
    <property type="entry name" value="RNase_PH_PNPase_1"/>
    <property type="match status" value="1"/>
</dbReference>
<dbReference type="CDD" id="cd11364">
    <property type="entry name" value="RNase_PH_PNPase_2"/>
    <property type="match status" value="1"/>
</dbReference>
<dbReference type="FunFam" id="3.30.1370.10:FF:000001">
    <property type="entry name" value="Polyribonucleotide nucleotidyltransferase"/>
    <property type="match status" value="1"/>
</dbReference>
<dbReference type="FunFam" id="3.30.230.70:FF:000001">
    <property type="entry name" value="Polyribonucleotide nucleotidyltransferase"/>
    <property type="match status" value="1"/>
</dbReference>
<dbReference type="FunFam" id="3.30.230.70:FF:000002">
    <property type="entry name" value="Polyribonucleotide nucleotidyltransferase"/>
    <property type="match status" value="1"/>
</dbReference>
<dbReference type="Gene3D" id="3.30.230.70">
    <property type="entry name" value="GHMP Kinase, N-terminal domain"/>
    <property type="match status" value="2"/>
</dbReference>
<dbReference type="Gene3D" id="3.30.1370.10">
    <property type="entry name" value="K Homology domain, type 1"/>
    <property type="match status" value="1"/>
</dbReference>
<dbReference type="Gene3D" id="2.40.50.140">
    <property type="entry name" value="Nucleic acid-binding proteins"/>
    <property type="match status" value="1"/>
</dbReference>
<dbReference type="HAMAP" id="MF_01595">
    <property type="entry name" value="PNPase"/>
    <property type="match status" value="1"/>
</dbReference>
<dbReference type="InterPro" id="IPR001247">
    <property type="entry name" value="ExoRNase_PH_dom1"/>
</dbReference>
<dbReference type="InterPro" id="IPR015847">
    <property type="entry name" value="ExoRNase_PH_dom2"/>
</dbReference>
<dbReference type="InterPro" id="IPR036345">
    <property type="entry name" value="ExoRNase_PH_dom2_sf"/>
</dbReference>
<dbReference type="InterPro" id="IPR004087">
    <property type="entry name" value="KH_dom"/>
</dbReference>
<dbReference type="InterPro" id="IPR004088">
    <property type="entry name" value="KH_dom_type_1"/>
</dbReference>
<dbReference type="InterPro" id="IPR036612">
    <property type="entry name" value="KH_dom_type_1_sf"/>
</dbReference>
<dbReference type="InterPro" id="IPR012340">
    <property type="entry name" value="NA-bd_OB-fold"/>
</dbReference>
<dbReference type="InterPro" id="IPR012162">
    <property type="entry name" value="PNPase"/>
</dbReference>
<dbReference type="InterPro" id="IPR027408">
    <property type="entry name" value="PNPase/RNase_PH_dom_sf"/>
</dbReference>
<dbReference type="InterPro" id="IPR015848">
    <property type="entry name" value="PNPase_PH_RNA-bd_bac/org-type"/>
</dbReference>
<dbReference type="InterPro" id="IPR020568">
    <property type="entry name" value="Ribosomal_Su5_D2-typ_SF"/>
</dbReference>
<dbReference type="InterPro" id="IPR003029">
    <property type="entry name" value="S1_domain"/>
</dbReference>
<dbReference type="NCBIfam" id="TIGR03591">
    <property type="entry name" value="polynuc_phos"/>
    <property type="match status" value="1"/>
</dbReference>
<dbReference type="NCBIfam" id="NF008805">
    <property type="entry name" value="PRK11824.1"/>
    <property type="match status" value="1"/>
</dbReference>
<dbReference type="PANTHER" id="PTHR11252">
    <property type="entry name" value="POLYRIBONUCLEOTIDE NUCLEOTIDYLTRANSFERASE"/>
    <property type="match status" value="1"/>
</dbReference>
<dbReference type="PANTHER" id="PTHR11252:SF0">
    <property type="entry name" value="POLYRIBONUCLEOTIDE NUCLEOTIDYLTRANSFERASE 1, MITOCHONDRIAL"/>
    <property type="match status" value="1"/>
</dbReference>
<dbReference type="Pfam" id="PF00013">
    <property type="entry name" value="KH_1"/>
    <property type="match status" value="1"/>
</dbReference>
<dbReference type="Pfam" id="PF03726">
    <property type="entry name" value="PNPase"/>
    <property type="match status" value="1"/>
</dbReference>
<dbReference type="Pfam" id="PF01138">
    <property type="entry name" value="RNase_PH"/>
    <property type="match status" value="2"/>
</dbReference>
<dbReference type="Pfam" id="PF03725">
    <property type="entry name" value="RNase_PH_C"/>
    <property type="match status" value="2"/>
</dbReference>
<dbReference type="Pfam" id="PF00575">
    <property type="entry name" value="S1"/>
    <property type="match status" value="1"/>
</dbReference>
<dbReference type="PIRSF" id="PIRSF005499">
    <property type="entry name" value="PNPase"/>
    <property type="match status" value="1"/>
</dbReference>
<dbReference type="SMART" id="SM00322">
    <property type="entry name" value="KH"/>
    <property type="match status" value="1"/>
</dbReference>
<dbReference type="SMART" id="SM00316">
    <property type="entry name" value="S1"/>
    <property type="match status" value="1"/>
</dbReference>
<dbReference type="SUPFAM" id="SSF54791">
    <property type="entry name" value="Eukaryotic type KH-domain (KH-domain type I)"/>
    <property type="match status" value="1"/>
</dbReference>
<dbReference type="SUPFAM" id="SSF50249">
    <property type="entry name" value="Nucleic acid-binding proteins"/>
    <property type="match status" value="1"/>
</dbReference>
<dbReference type="SUPFAM" id="SSF55666">
    <property type="entry name" value="Ribonuclease PH domain 2-like"/>
    <property type="match status" value="2"/>
</dbReference>
<dbReference type="SUPFAM" id="SSF54211">
    <property type="entry name" value="Ribosomal protein S5 domain 2-like"/>
    <property type="match status" value="2"/>
</dbReference>
<dbReference type="PROSITE" id="PS50084">
    <property type="entry name" value="KH_TYPE_1"/>
    <property type="match status" value="1"/>
</dbReference>
<dbReference type="PROSITE" id="PS50126">
    <property type="entry name" value="S1"/>
    <property type="match status" value="1"/>
</dbReference>
<name>PNP_PORGI</name>
<proteinExistence type="inferred from homology"/>
<evidence type="ECO:0000255" key="1">
    <source>
        <dbReference type="HAMAP-Rule" id="MF_01595"/>
    </source>
</evidence>
<evidence type="ECO:0000256" key="2">
    <source>
        <dbReference type="SAM" id="MobiDB-lite"/>
    </source>
</evidence>
<reference key="1">
    <citation type="journal article" date="2003" name="J. Bacteriol.">
        <title>Complete genome sequence of the oral pathogenic bacterium Porphyromonas gingivalis strain W83.</title>
        <authorList>
            <person name="Nelson K.E."/>
            <person name="Fleischmann R.D."/>
            <person name="DeBoy R.T."/>
            <person name="Paulsen I.T."/>
            <person name="Fouts D.E."/>
            <person name="Eisen J.A."/>
            <person name="Daugherty S.C."/>
            <person name="Dodson R.J."/>
            <person name="Durkin A.S."/>
            <person name="Gwinn M.L."/>
            <person name="Haft D.H."/>
            <person name="Kolonay J.F."/>
            <person name="Nelson W.C."/>
            <person name="Mason T.M."/>
            <person name="Tallon L."/>
            <person name="Gray J."/>
            <person name="Granger D."/>
            <person name="Tettelin H."/>
            <person name="Dong H."/>
            <person name="Galvin J.L."/>
            <person name="Duncan M.J."/>
            <person name="Dewhirst F.E."/>
            <person name="Fraser C.M."/>
        </authorList>
    </citation>
    <scope>NUCLEOTIDE SEQUENCE [LARGE SCALE GENOMIC DNA]</scope>
    <source>
        <strain>ATCC BAA-308 / W83</strain>
    </source>
</reference>
<organism>
    <name type="scientific">Porphyromonas gingivalis (strain ATCC BAA-308 / W83)</name>
    <dbReference type="NCBI Taxonomy" id="242619"/>
    <lineage>
        <taxon>Bacteria</taxon>
        <taxon>Pseudomonadati</taxon>
        <taxon>Bacteroidota</taxon>
        <taxon>Bacteroidia</taxon>
        <taxon>Bacteroidales</taxon>
        <taxon>Porphyromonadaceae</taxon>
        <taxon>Porphyromonas</taxon>
    </lineage>
</organism>